<gene>
    <name type="primary">HBB</name>
</gene>
<protein>
    <recommendedName>
        <fullName>Hemoglobin subunit beta</fullName>
    </recommendedName>
    <alternativeName>
        <fullName>Beta-globin</fullName>
    </alternativeName>
    <alternativeName>
        <fullName>Hemoglobin beta chain</fullName>
    </alternativeName>
</protein>
<comment type="function">
    <text>Involved in oxygen transport from the lung to the various peripheral tissues.</text>
</comment>
<comment type="subunit">
    <text>Tetramer of two alpha and two different beta chains. Two external cysteine residues at beta-16 and beta-52 cause reversible polymerization to octamers and most likely irreversible formation of higher polymers.</text>
</comment>
<comment type="tissue specificity">
    <text>Red blood cells.</text>
</comment>
<comment type="similarity">
    <text evidence="3">Belongs to the globin family.</text>
</comment>
<evidence type="ECO:0000250" key="1">
    <source>
        <dbReference type="UniProtKB" id="P02086"/>
    </source>
</evidence>
<evidence type="ECO:0000250" key="2">
    <source>
        <dbReference type="UniProtKB" id="P68871"/>
    </source>
</evidence>
<evidence type="ECO:0000255" key="3">
    <source>
        <dbReference type="PROSITE-ProRule" id="PRU00238"/>
    </source>
</evidence>
<feature type="chain" id="PRO_0000052951" description="Hemoglobin subunit beta">
    <location>
        <begin position="1"/>
        <end position="146"/>
    </location>
</feature>
<feature type="domain" description="Globin" evidence="3">
    <location>
        <begin position="2"/>
        <end position="146"/>
    </location>
</feature>
<feature type="binding site" description="distal binding residue">
    <location>
        <position position="63"/>
    </location>
    <ligand>
        <name>heme b</name>
        <dbReference type="ChEBI" id="CHEBI:60344"/>
    </ligand>
    <ligandPart>
        <name>Fe</name>
        <dbReference type="ChEBI" id="CHEBI:18248"/>
    </ligandPart>
</feature>
<feature type="binding site" description="proximal binding residue">
    <location>
        <position position="92"/>
    </location>
    <ligand>
        <name>heme b</name>
        <dbReference type="ChEBI" id="CHEBI:60344"/>
    </ligand>
    <ligandPart>
        <name>Fe</name>
        <dbReference type="ChEBI" id="CHEBI:18248"/>
    </ligandPart>
</feature>
<feature type="modified residue" description="N-acetylvaline" evidence="1">
    <location>
        <position position="1"/>
    </location>
</feature>
<feature type="modified residue" description="Phosphothreonine" evidence="2">
    <location>
        <position position="12"/>
    </location>
</feature>
<feature type="modified residue" description="N6-acetyllysine" evidence="2">
    <location>
        <position position="59"/>
    </location>
</feature>
<feature type="modified residue" description="N6-acetyllysine" evidence="2">
    <location>
        <position position="82"/>
    </location>
</feature>
<feature type="modified residue" description="S-nitrosocysteine" evidence="2">
    <location>
        <position position="93"/>
    </location>
</feature>
<feature type="modified residue" description="N6-acetyllysine" evidence="2">
    <location>
        <position position="144"/>
    </location>
</feature>
<feature type="sequence variant">
    <original>G</original>
    <variation>C</variation>
    <location>
        <position position="16"/>
    </location>
</feature>
<feature type="sequence variant">
    <original>F</original>
    <variation>L</variation>
    <location>
        <position position="118"/>
    </location>
</feature>
<accession>P24292</accession>
<proteinExistence type="evidence at protein level"/>
<organism>
    <name type="scientific">Echinops telfairi</name>
    <name type="common">Lesser hedgehog tenrec</name>
    <dbReference type="NCBI Taxonomy" id="9371"/>
    <lineage>
        <taxon>Eukaryota</taxon>
        <taxon>Metazoa</taxon>
        <taxon>Chordata</taxon>
        <taxon>Craniata</taxon>
        <taxon>Vertebrata</taxon>
        <taxon>Euteleostomi</taxon>
        <taxon>Mammalia</taxon>
        <taxon>Eutheria</taxon>
        <taxon>Afrotheria</taxon>
        <taxon>Tenrecidae</taxon>
        <taxon>Tenrecinae</taxon>
        <taxon>Echinops</taxon>
    </lineage>
</organism>
<keyword id="KW-0007">Acetylation</keyword>
<keyword id="KW-0903">Direct protein sequencing</keyword>
<keyword id="KW-0349">Heme</keyword>
<keyword id="KW-0408">Iron</keyword>
<keyword id="KW-0479">Metal-binding</keyword>
<keyword id="KW-0561">Oxygen transport</keyword>
<keyword id="KW-0597">Phosphoprotein</keyword>
<keyword id="KW-0702">S-nitrosylation</keyword>
<keyword id="KW-0813">Transport</keyword>
<dbReference type="PIR" id="S18398">
    <property type="entry name" value="S18398"/>
</dbReference>
<dbReference type="SMR" id="P24292"/>
<dbReference type="Proteomes" id="UP000694863">
    <property type="component" value="Unplaced"/>
</dbReference>
<dbReference type="GO" id="GO:0072562">
    <property type="term" value="C:blood microparticle"/>
    <property type="evidence" value="ECO:0007669"/>
    <property type="project" value="TreeGrafter"/>
</dbReference>
<dbReference type="GO" id="GO:0031838">
    <property type="term" value="C:haptoglobin-hemoglobin complex"/>
    <property type="evidence" value="ECO:0007669"/>
    <property type="project" value="TreeGrafter"/>
</dbReference>
<dbReference type="GO" id="GO:0005833">
    <property type="term" value="C:hemoglobin complex"/>
    <property type="evidence" value="ECO:0007669"/>
    <property type="project" value="InterPro"/>
</dbReference>
<dbReference type="GO" id="GO:0031720">
    <property type="term" value="F:haptoglobin binding"/>
    <property type="evidence" value="ECO:0007669"/>
    <property type="project" value="TreeGrafter"/>
</dbReference>
<dbReference type="GO" id="GO:0020037">
    <property type="term" value="F:heme binding"/>
    <property type="evidence" value="ECO:0007669"/>
    <property type="project" value="InterPro"/>
</dbReference>
<dbReference type="GO" id="GO:0031721">
    <property type="term" value="F:hemoglobin alpha binding"/>
    <property type="evidence" value="ECO:0007669"/>
    <property type="project" value="TreeGrafter"/>
</dbReference>
<dbReference type="GO" id="GO:0046872">
    <property type="term" value="F:metal ion binding"/>
    <property type="evidence" value="ECO:0007669"/>
    <property type="project" value="UniProtKB-KW"/>
</dbReference>
<dbReference type="GO" id="GO:0043177">
    <property type="term" value="F:organic acid binding"/>
    <property type="evidence" value="ECO:0007669"/>
    <property type="project" value="TreeGrafter"/>
</dbReference>
<dbReference type="GO" id="GO:0019825">
    <property type="term" value="F:oxygen binding"/>
    <property type="evidence" value="ECO:0007669"/>
    <property type="project" value="InterPro"/>
</dbReference>
<dbReference type="GO" id="GO:0005344">
    <property type="term" value="F:oxygen carrier activity"/>
    <property type="evidence" value="ECO:0007669"/>
    <property type="project" value="UniProtKB-KW"/>
</dbReference>
<dbReference type="GO" id="GO:0004601">
    <property type="term" value="F:peroxidase activity"/>
    <property type="evidence" value="ECO:0007669"/>
    <property type="project" value="TreeGrafter"/>
</dbReference>
<dbReference type="GO" id="GO:0042744">
    <property type="term" value="P:hydrogen peroxide catabolic process"/>
    <property type="evidence" value="ECO:0007669"/>
    <property type="project" value="TreeGrafter"/>
</dbReference>
<dbReference type="CDD" id="cd08925">
    <property type="entry name" value="Hb-beta-like"/>
    <property type="match status" value="1"/>
</dbReference>
<dbReference type="FunFam" id="1.10.490.10:FF:000001">
    <property type="entry name" value="Hemoglobin subunit beta"/>
    <property type="match status" value="1"/>
</dbReference>
<dbReference type="Gene3D" id="1.10.490.10">
    <property type="entry name" value="Globins"/>
    <property type="match status" value="1"/>
</dbReference>
<dbReference type="InterPro" id="IPR000971">
    <property type="entry name" value="Globin"/>
</dbReference>
<dbReference type="InterPro" id="IPR009050">
    <property type="entry name" value="Globin-like_sf"/>
</dbReference>
<dbReference type="InterPro" id="IPR012292">
    <property type="entry name" value="Globin/Proto"/>
</dbReference>
<dbReference type="InterPro" id="IPR002337">
    <property type="entry name" value="Hemoglobin_b"/>
</dbReference>
<dbReference type="InterPro" id="IPR050056">
    <property type="entry name" value="Hemoglobin_oxygen_transport"/>
</dbReference>
<dbReference type="PANTHER" id="PTHR11442">
    <property type="entry name" value="HEMOGLOBIN FAMILY MEMBER"/>
    <property type="match status" value="1"/>
</dbReference>
<dbReference type="PANTHER" id="PTHR11442:SF42">
    <property type="entry name" value="HEMOGLOBIN SUBUNIT BETA"/>
    <property type="match status" value="1"/>
</dbReference>
<dbReference type="Pfam" id="PF00042">
    <property type="entry name" value="Globin"/>
    <property type="match status" value="1"/>
</dbReference>
<dbReference type="PRINTS" id="PR00814">
    <property type="entry name" value="BETAHAEM"/>
</dbReference>
<dbReference type="SUPFAM" id="SSF46458">
    <property type="entry name" value="Globin-like"/>
    <property type="match status" value="1"/>
</dbReference>
<dbReference type="PROSITE" id="PS01033">
    <property type="entry name" value="GLOBIN"/>
    <property type="match status" value="1"/>
</dbReference>
<sequence length="146" mass="16135">VHMTDAEKKLVTTMWGKLDVDAAGAETLGRVLVVYPWTQRFFGHFGDLSSACAVMDNPKVQAHGKKVLHSLGDGLNHLDDLKHFYAALSELHCDKLHVDPENFRLLGNVLVCVMSRHFGAEFTPQVQAAYQKVVAGVANALAHKYH</sequence>
<reference key="1">
    <citation type="journal article" date="1991" name="Biol. Chem. Hoppe-Seyler">
        <title>Primary structure and oxygen-binding properties of the hemoglobin from the lesser hedgehog tenrec (Echinops telfairi, Zalambdodonta). Evidence for phylogenetic isolation.</title>
        <authorList>
            <person name="Piccinini M."/>
            <person name="Kleinschmidt T."/>
            <person name="Gorr T."/>
            <person name="Weber R.E."/>
            <person name="Kuenzle H."/>
            <person name="Braunitzer G."/>
        </authorList>
    </citation>
    <scope>PROTEIN SEQUENCE</scope>
</reference>
<name>HBB_ECHTE</name>